<organism>
    <name type="scientific">Yersinia pestis (strain Pestoides F)</name>
    <dbReference type="NCBI Taxonomy" id="386656"/>
    <lineage>
        <taxon>Bacteria</taxon>
        <taxon>Pseudomonadati</taxon>
        <taxon>Pseudomonadota</taxon>
        <taxon>Gammaproteobacteria</taxon>
        <taxon>Enterobacterales</taxon>
        <taxon>Yersiniaceae</taxon>
        <taxon>Yersinia</taxon>
    </lineage>
</organism>
<protein>
    <recommendedName>
        <fullName evidence="1">Pantothenate kinase</fullName>
        <ecNumber evidence="1">2.7.1.33</ecNumber>
    </recommendedName>
    <alternativeName>
        <fullName evidence="1">Pantothenic acid kinase</fullName>
    </alternativeName>
</protein>
<comment type="catalytic activity">
    <reaction evidence="1">
        <text>(R)-pantothenate + ATP = (R)-4'-phosphopantothenate + ADP + H(+)</text>
        <dbReference type="Rhea" id="RHEA:16373"/>
        <dbReference type="ChEBI" id="CHEBI:10986"/>
        <dbReference type="ChEBI" id="CHEBI:15378"/>
        <dbReference type="ChEBI" id="CHEBI:29032"/>
        <dbReference type="ChEBI" id="CHEBI:30616"/>
        <dbReference type="ChEBI" id="CHEBI:456216"/>
        <dbReference type="EC" id="2.7.1.33"/>
    </reaction>
</comment>
<comment type="pathway">
    <text evidence="1">Cofactor biosynthesis; coenzyme A biosynthesis; CoA from (R)-pantothenate: step 1/5.</text>
</comment>
<comment type="subcellular location">
    <subcellularLocation>
        <location evidence="1">Cytoplasm</location>
    </subcellularLocation>
</comment>
<comment type="similarity">
    <text evidence="1">Belongs to the prokaryotic pantothenate kinase family.</text>
</comment>
<feature type="chain" id="PRO_1000043277" description="Pantothenate kinase">
    <location>
        <begin position="1"/>
        <end position="316"/>
    </location>
</feature>
<feature type="binding site" evidence="1">
    <location>
        <begin position="95"/>
        <end position="102"/>
    </location>
    <ligand>
        <name>ATP</name>
        <dbReference type="ChEBI" id="CHEBI:30616"/>
    </ligand>
</feature>
<dbReference type="EC" id="2.7.1.33" evidence="1"/>
<dbReference type="EMBL" id="CP000668">
    <property type="protein sequence ID" value="ABP41732.1"/>
    <property type="molecule type" value="Genomic_DNA"/>
</dbReference>
<dbReference type="RefSeq" id="WP_002212290.1">
    <property type="nucleotide sequence ID" value="NZ_CP009715.1"/>
</dbReference>
<dbReference type="SMR" id="A4TR20"/>
<dbReference type="GeneID" id="57974956"/>
<dbReference type="KEGG" id="ypp:YPDSF_3379"/>
<dbReference type="PATRIC" id="fig|386656.14.peg.949"/>
<dbReference type="UniPathway" id="UPA00241">
    <property type="reaction ID" value="UER00352"/>
</dbReference>
<dbReference type="GO" id="GO:0005737">
    <property type="term" value="C:cytoplasm"/>
    <property type="evidence" value="ECO:0007669"/>
    <property type="project" value="UniProtKB-SubCell"/>
</dbReference>
<dbReference type="GO" id="GO:0005524">
    <property type="term" value="F:ATP binding"/>
    <property type="evidence" value="ECO:0007669"/>
    <property type="project" value="UniProtKB-UniRule"/>
</dbReference>
<dbReference type="GO" id="GO:0004594">
    <property type="term" value="F:pantothenate kinase activity"/>
    <property type="evidence" value="ECO:0007669"/>
    <property type="project" value="UniProtKB-UniRule"/>
</dbReference>
<dbReference type="GO" id="GO:0015937">
    <property type="term" value="P:coenzyme A biosynthetic process"/>
    <property type="evidence" value="ECO:0007669"/>
    <property type="project" value="UniProtKB-UniRule"/>
</dbReference>
<dbReference type="CDD" id="cd02025">
    <property type="entry name" value="PanK"/>
    <property type="match status" value="1"/>
</dbReference>
<dbReference type="FunFam" id="3.40.50.300:FF:000242">
    <property type="entry name" value="Pantothenate kinase"/>
    <property type="match status" value="1"/>
</dbReference>
<dbReference type="Gene3D" id="3.40.50.300">
    <property type="entry name" value="P-loop containing nucleotide triphosphate hydrolases"/>
    <property type="match status" value="1"/>
</dbReference>
<dbReference type="HAMAP" id="MF_00215">
    <property type="entry name" value="Pantothen_kinase_1"/>
    <property type="match status" value="1"/>
</dbReference>
<dbReference type="InterPro" id="IPR027417">
    <property type="entry name" value="P-loop_NTPase"/>
</dbReference>
<dbReference type="InterPro" id="IPR004566">
    <property type="entry name" value="PanK"/>
</dbReference>
<dbReference type="InterPro" id="IPR006083">
    <property type="entry name" value="PRK/URK"/>
</dbReference>
<dbReference type="NCBIfam" id="TIGR00554">
    <property type="entry name" value="panK_bact"/>
    <property type="match status" value="1"/>
</dbReference>
<dbReference type="PANTHER" id="PTHR10285">
    <property type="entry name" value="URIDINE KINASE"/>
    <property type="match status" value="1"/>
</dbReference>
<dbReference type="Pfam" id="PF00485">
    <property type="entry name" value="PRK"/>
    <property type="match status" value="1"/>
</dbReference>
<dbReference type="PIRSF" id="PIRSF000545">
    <property type="entry name" value="Pantothenate_kin"/>
    <property type="match status" value="1"/>
</dbReference>
<dbReference type="SUPFAM" id="SSF52540">
    <property type="entry name" value="P-loop containing nucleoside triphosphate hydrolases"/>
    <property type="match status" value="1"/>
</dbReference>
<keyword id="KW-0067">ATP-binding</keyword>
<keyword id="KW-0173">Coenzyme A biosynthesis</keyword>
<keyword id="KW-0963">Cytoplasm</keyword>
<keyword id="KW-0418">Kinase</keyword>
<keyword id="KW-0547">Nucleotide-binding</keyword>
<keyword id="KW-0808">Transferase</keyword>
<proteinExistence type="inferred from homology"/>
<evidence type="ECO:0000255" key="1">
    <source>
        <dbReference type="HAMAP-Rule" id="MF_00215"/>
    </source>
</evidence>
<gene>
    <name evidence="1" type="primary">coaA</name>
    <name type="ordered locus">YPDSF_3379</name>
</gene>
<accession>A4TR20</accession>
<reference key="1">
    <citation type="submission" date="2007-02" db="EMBL/GenBank/DDBJ databases">
        <title>Complete sequence of chromosome of Yersinia pestis Pestoides F.</title>
        <authorList>
            <consortium name="US DOE Joint Genome Institute"/>
            <person name="Copeland A."/>
            <person name="Lucas S."/>
            <person name="Lapidus A."/>
            <person name="Barry K."/>
            <person name="Detter J.C."/>
            <person name="Glavina del Rio T."/>
            <person name="Hammon N."/>
            <person name="Israni S."/>
            <person name="Dalin E."/>
            <person name="Tice H."/>
            <person name="Pitluck S."/>
            <person name="Di Bartolo G."/>
            <person name="Chain P."/>
            <person name="Malfatti S."/>
            <person name="Shin M."/>
            <person name="Vergez L."/>
            <person name="Schmutz J."/>
            <person name="Larimer F."/>
            <person name="Land M."/>
            <person name="Hauser L."/>
            <person name="Worsham P."/>
            <person name="Chu M."/>
            <person name="Bearden S."/>
            <person name="Garcia E."/>
            <person name="Richardson P."/>
        </authorList>
    </citation>
    <scope>NUCLEOTIDE SEQUENCE [LARGE SCALE GENOMIC DNA]</scope>
    <source>
        <strain>Pestoides F</strain>
    </source>
</reference>
<sequence length="316" mass="36016">MTKREQSLATPYLQFDRTQWAALRDSVPLTLTEEEIVKLKGINEDLSLDEVAQIYLPLSRLLNFYISSNLRRQAVLEQFLGTDGQRIPYVIGIAGSVAVGKSTTARLLQALLSRWPEHRSVELITTDGFLHPNKVLNERGLMKKKGFPESYDMHNLVKFVSEVKSGADYVTAPVYSHLIYDVVPDGNKVIKQPDILILEGLNVLQSGMDYPHDPHHVFVSDFVDFSIYVDAPEDLLQSWYINRFLKFRQGAFSNPDSYFHNYAKLPETEAIKIATQLWNEINGLNLKQNILPTRERASLIMTKSANHAVESVRLRK</sequence>
<name>COAA_YERPP</name>